<sequence length="422" mass="45500">MTTIVGVRAREVLDSRGFPTVEAEVELEGGARGRAMVPSGASTGTHEALELRDGGKRYLGKGVRRAVENVNERIAPELVGMDALDQEGVDRAMLELDGTPNKANLGANAVLAVSLAVARAAAEALGLPLYRYLGGVQGVTLPVPLMNVINGGKHADNRVDFQEFMLVPAGAGSFAEALRIGAEVFHTLKAVLKEKGYSTNVGDEGGFAPDLRSNEEAVELLLLAIERAGYTPGQEVSLALDPATSELYRDGKYHLEGEGKVLSSEEMVAFWEAWVEKYPIRSIEDGLAEDDWEGWRLLTERLGGKVQLVGDDLFVTNPERLRAGIERGVANAILVKVNQIGTLSETLEAIRLAQRSGYRAVISHRSGETEDSFIADLAVAVNAGQIKTGSLSRSDRLAKYNQLLRIEEELGRAARFLGYAAF</sequence>
<name>ENO_THET8</name>
<proteinExistence type="inferred from homology"/>
<feature type="chain" id="PRO_0000133996" description="Enolase">
    <location>
        <begin position="1"/>
        <end position="422"/>
    </location>
</feature>
<feature type="active site" description="Proton donor" evidence="1">
    <location>
        <position position="204"/>
    </location>
</feature>
<feature type="active site" description="Proton acceptor" evidence="1">
    <location>
        <position position="336"/>
    </location>
</feature>
<feature type="binding site" evidence="1">
    <location>
        <position position="162"/>
    </location>
    <ligand>
        <name>(2R)-2-phosphoglycerate</name>
        <dbReference type="ChEBI" id="CHEBI:58289"/>
    </ligand>
</feature>
<feature type="binding site" evidence="1">
    <location>
        <position position="241"/>
    </location>
    <ligand>
        <name>Mg(2+)</name>
        <dbReference type="ChEBI" id="CHEBI:18420"/>
    </ligand>
</feature>
<feature type="binding site" evidence="1">
    <location>
        <position position="284"/>
    </location>
    <ligand>
        <name>Mg(2+)</name>
        <dbReference type="ChEBI" id="CHEBI:18420"/>
    </ligand>
</feature>
<feature type="binding site" evidence="1">
    <location>
        <position position="311"/>
    </location>
    <ligand>
        <name>Mg(2+)</name>
        <dbReference type="ChEBI" id="CHEBI:18420"/>
    </ligand>
</feature>
<feature type="binding site" evidence="1">
    <location>
        <position position="336"/>
    </location>
    <ligand>
        <name>(2R)-2-phosphoglycerate</name>
        <dbReference type="ChEBI" id="CHEBI:58289"/>
    </ligand>
</feature>
<feature type="binding site" evidence="1">
    <location>
        <position position="365"/>
    </location>
    <ligand>
        <name>(2R)-2-phosphoglycerate</name>
        <dbReference type="ChEBI" id="CHEBI:58289"/>
    </ligand>
</feature>
<feature type="binding site" evidence="1">
    <location>
        <position position="366"/>
    </location>
    <ligand>
        <name>(2R)-2-phosphoglycerate</name>
        <dbReference type="ChEBI" id="CHEBI:58289"/>
    </ligand>
</feature>
<feature type="binding site" evidence="1">
    <location>
        <position position="387"/>
    </location>
    <ligand>
        <name>(2R)-2-phosphoglycerate</name>
        <dbReference type="ChEBI" id="CHEBI:58289"/>
    </ligand>
</feature>
<accession>Q5SME1</accession>
<gene>
    <name evidence="1" type="primary">eno</name>
    <name type="ordered locus">TTHA0002</name>
</gene>
<dbReference type="EC" id="4.2.1.11" evidence="1"/>
<dbReference type="EMBL" id="AP008226">
    <property type="protein sequence ID" value="BAD69825.1"/>
    <property type="molecule type" value="Genomic_DNA"/>
</dbReference>
<dbReference type="RefSeq" id="WP_011173981.1">
    <property type="nucleotide sequence ID" value="NC_006461.1"/>
</dbReference>
<dbReference type="RefSeq" id="YP_143268.1">
    <property type="nucleotide sequence ID" value="NC_006461.1"/>
</dbReference>
<dbReference type="SMR" id="Q5SME1"/>
<dbReference type="EnsemblBacteria" id="BAD69825">
    <property type="protein sequence ID" value="BAD69825"/>
    <property type="gene ID" value="BAD69825"/>
</dbReference>
<dbReference type="GeneID" id="3169678"/>
<dbReference type="KEGG" id="ttj:TTHA0002"/>
<dbReference type="PATRIC" id="fig|300852.9.peg.2"/>
<dbReference type="eggNOG" id="COG0148">
    <property type="taxonomic scope" value="Bacteria"/>
</dbReference>
<dbReference type="HOGENOM" id="CLU_031223_2_1_0"/>
<dbReference type="PhylomeDB" id="Q5SME1"/>
<dbReference type="UniPathway" id="UPA00109">
    <property type="reaction ID" value="UER00187"/>
</dbReference>
<dbReference type="Proteomes" id="UP000000532">
    <property type="component" value="Chromosome"/>
</dbReference>
<dbReference type="GO" id="GO:0009986">
    <property type="term" value="C:cell surface"/>
    <property type="evidence" value="ECO:0007669"/>
    <property type="project" value="UniProtKB-SubCell"/>
</dbReference>
<dbReference type="GO" id="GO:0005576">
    <property type="term" value="C:extracellular region"/>
    <property type="evidence" value="ECO:0007669"/>
    <property type="project" value="UniProtKB-SubCell"/>
</dbReference>
<dbReference type="GO" id="GO:0000015">
    <property type="term" value="C:phosphopyruvate hydratase complex"/>
    <property type="evidence" value="ECO:0007669"/>
    <property type="project" value="InterPro"/>
</dbReference>
<dbReference type="GO" id="GO:0000287">
    <property type="term" value="F:magnesium ion binding"/>
    <property type="evidence" value="ECO:0007669"/>
    <property type="project" value="UniProtKB-UniRule"/>
</dbReference>
<dbReference type="GO" id="GO:0004634">
    <property type="term" value="F:phosphopyruvate hydratase activity"/>
    <property type="evidence" value="ECO:0007669"/>
    <property type="project" value="UniProtKB-UniRule"/>
</dbReference>
<dbReference type="GO" id="GO:0006096">
    <property type="term" value="P:glycolytic process"/>
    <property type="evidence" value="ECO:0007669"/>
    <property type="project" value="UniProtKB-UniRule"/>
</dbReference>
<dbReference type="CDD" id="cd03313">
    <property type="entry name" value="enolase"/>
    <property type="match status" value="1"/>
</dbReference>
<dbReference type="FunFam" id="3.20.20.120:FF:000001">
    <property type="entry name" value="Enolase"/>
    <property type="match status" value="1"/>
</dbReference>
<dbReference type="FunFam" id="3.30.390.10:FF:000001">
    <property type="entry name" value="Enolase"/>
    <property type="match status" value="1"/>
</dbReference>
<dbReference type="Gene3D" id="3.20.20.120">
    <property type="entry name" value="Enolase-like C-terminal domain"/>
    <property type="match status" value="1"/>
</dbReference>
<dbReference type="Gene3D" id="3.30.390.10">
    <property type="entry name" value="Enolase-like, N-terminal domain"/>
    <property type="match status" value="1"/>
</dbReference>
<dbReference type="HAMAP" id="MF_00318">
    <property type="entry name" value="Enolase"/>
    <property type="match status" value="1"/>
</dbReference>
<dbReference type="InterPro" id="IPR000941">
    <property type="entry name" value="Enolase"/>
</dbReference>
<dbReference type="InterPro" id="IPR036849">
    <property type="entry name" value="Enolase-like_C_sf"/>
</dbReference>
<dbReference type="InterPro" id="IPR029017">
    <property type="entry name" value="Enolase-like_N"/>
</dbReference>
<dbReference type="InterPro" id="IPR020810">
    <property type="entry name" value="Enolase_C"/>
</dbReference>
<dbReference type="InterPro" id="IPR020809">
    <property type="entry name" value="Enolase_CS"/>
</dbReference>
<dbReference type="InterPro" id="IPR020811">
    <property type="entry name" value="Enolase_N"/>
</dbReference>
<dbReference type="NCBIfam" id="TIGR01060">
    <property type="entry name" value="eno"/>
    <property type="match status" value="1"/>
</dbReference>
<dbReference type="PANTHER" id="PTHR11902">
    <property type="entry name" value="ENOLASE"/>
    <property type="match status" value="1"/>
</dbReference>
<dbReference type="PANTHER" id="PTHR11902:SF1">
    <property type="entry name" value="ENOLASE"/>
    <property type="match status" value="1"/>
</dbReference>
<dbReference type="Pfam" id="PF00113">
    <property type="entry name" value="Enolase_C"/>
    <property type="match status" value="1"/>
</dbReference>
<dbReference type="Pfam" id="PF03952">
    <property type="entry name" value="Enolase_N"/>
    <property type="match status" value="1"/>
</dbReference>
<dbReference type="PIRSF" id="PIRSF001400">
    <property type="entry name" value="Enolase"/>
    <property type="match status" value="1"/>
</dbReference>
<dbReference type="PRINTS" id="PR00148">
    <property type="entry name" value="ENOLASE"/>
</dbReference>
<dbReference type="SFLD" id="SFLDS00001">
    <property type="entry name" value="Enolase"/>
    <property type="match status" value="1"/>
</dbReference>
<dbReference type="SFLD" id="SFLDF00002">
    <property type="entry name" value="enolase"/>
    <property type="match status" value="1"/>
</dbReference>
<dbReference type="SMART" id="SM01192">
    <property type="entry name" value="Enolase_C"/>
    <property type="match status" value="1"/>
</dbReference>
<dbReference type="SMART" id="SM01193">
    <property type="entry name" value="Enolase_N"/>
    <property type="match status" value="1"/>
</dbReference>
<dbReference type="SUPFAM" id="SSF51604">
    <property type="entry name" value="Enolase C-terminal domain-like"/>
    <property type="match status" value="1"/>
</dbReference>
<dbReference type="SUPFAM" id="SSF54826">
    <property type="entry name" value="Enolase N-terminal domain-like"/>
    <property type="match status" value="1"/>
</dbReference>
<dbReference type="PROSITE" id="PS00164">
    <property type="entry name" value="ENOLASE"/>
    <property type="match status" value="1"/>
</dbReference>
<organism>
    <name type="scientific">Thermus thermophilus (strain ATCC 27634 / DSM 579 / HB8)</name>
    <dbReference type="NCBI Taxonomy" id="300852"/>
    <lineage>
        <taxon>Bacteria</taxon>
        <taxon>Thermotogati</taxon>
        <taxon>Deinococcota</taxon>
        <taxon>Deinococci</taxon>
        <taxon>Thermales</taxon>
        <taxon>Thermaceae</taxon>
        <taxon>Thermus</taxon>
    </lineage>
</organism>
<keyword id="KW-0963">Cytoplasm</keyword>
<keyword id="KW-0324">Glycolysis</keyword>
<keyword id="KW-0456">Lyase</keyword>
<keyword id="KW-0460">Magnesium</keyword>
<keyword id="KW-0479">Metal-binding</keyword>
<keyword id="KW-1185">Reference proteome</keyword>
<keyword id="KW-0964">Secreted</keyword>
<evidence type="ECO:0000255" key="1">
    <source>
        <dbReference type="HAMAP-Rule" id="MF_00318"/>
    </source>
</evidence>
<comment type="function">
    <text evidence="1">Catalyzes the reversible conversion of 2-phosphoglycerate (2-PG) into phosphoenolpyruvate (PEP). It is essential for the degradation of carbohydrates via glycolysis.</text>
</comment>
<comment type="catalytic activity">
    <reaction evidence="1">
        <text>(2R)-2-phosphoglycerate = phosphoenolpyruvate + H2O</text>
        <dbReference type="Rhea" id="RHEA:10164"/>
        <dbReference type="ChEBI" id="CHEBI:15377"/>
        <dbReference type="ChEBI" id="CHEBI:58289"/>
        <dbReference type="ChEBI" id="CHEBI:58702"/>
        <dbReference type="EC" id="4.2.1.11"/>
    </reaction>
</comment>
<comment type="cofactor">
    <cofactor evidence="1">
        <name>Mg(2+)</name>
        <dbReference type="ChEBI" id="CHEBI:18420"/>
    </cofactor>
    <text evidence="1">Binds a second Mg(2+) ion via substrate during catalysis.</text>
</comment>
<comment type="pathway">
    <text evidence="1">Carbohydrate degradation; glycolysis; pyruvate from D-glyceraldehyde 3-phosphate: step 4/5.</text>
</comment>
<comment type="subcellular location">
    <subcellularLocation>
        <location evidence="1">Cytoplasm</location>
    </subcellularLocation>
    <subcellularLocation>
        <location evidence="1">Secreted</location>
    </subcellularLocation>
    <subcellularLocation>
        <location evidence="1">Cell surface</location>
    </subcellularLocation>
    <text evidence="1">Fractions of enolase are present in both the cytoplasm and on the cell surface.</text>
</comment>
<comment type="similarity">
    <text evidence="1">Belongs to the enolase family.</text>
</comment>
<protein>
    <recommendedName>
        <fullName evidence="1">Enolase</fullName>
        <ecNumber evidence="1">4.2.1.11</ecNumber>
    </recommendedName>
    <alternativeName>
        <fullName evidence="1">2-phospho-D-glycerate hydro-lyase</fullName>
    </alternativeName>
    <alternativeName>
        <fullName evidence="1">2-phosphoglycerate dehydratase</fullName>
    </alternativeName>
</protein>
<reference key="1">
    <citation type="submission" date="2004-11" db="EMBL/GenBank/DDBJ databases">
        <title>Complete genome sequence of Thermus thermophilus HB8.</title>
        <authorList>
            <person name="Masui R."/>
            <person name="Kurokawa K."/>
            <person name="Nakagawa N."/>
            <person name="Tokunaga F."/>
            <person name="Koyama Y."/>
            <person name="Shibata T."/>
            <person name="Oshima T."/>
            <person name="Yokoyama S."/>
            <person name="Yasunaga T."/>
            <person name="Kuramitsu S."/>
        </authorList>
    </citation>
    <scope>NUCLEOTIDE SEQUENCE [LARGE SCALE GENOMIC DNA]</scope>
    <source>
        <strain>ATCC 27634 / DSM 579 / HB8</strain>
    </source>
</reference>